<organism>
    <name type="scientific">Clostridium acetobutylicum (strain ATCC 824 / DSM 792 / JCM 1419 / IAM 19013 / LMG 5710 / NBRC 13948 / NRRL B-527 / VKM B-1787 / 2291 / W)</name>
    <dbReference type="NCBI Taxonomy" id="272562"/>
    <lineage>
        <taxon>Bacteria</taxon>
        <taxon>Bacillati</taxon>
        <taxon>Bacillota</taxon>
        <taxon>Clostridia</taxon>
        <taxon>Eubacteriales</taxon>
        <taxon>Clostridiaceae</taxon>
        <taxon>Clostridium</taxon>
    </lineage>
</organism>
<protein>
    <recommendedName>
        <fullName>Probable transaldolase</fullName>
        <ecNumber>2.2.1.2</ecNumber>
    </recommendedName>
</protein>
<accession>Q97JD9</accession>
<feature type="chain" id="PRO_0000173664" description="Probable transaldolase">
    <location>
        <begin position="1"/>
        <end position="215"/>
    </location>
</feature>
<feature type="active site" description="Schiff-base intermediate with substrate" evidence="1">
    <location>
        <position position="83"/>
    </location>
</feature>
<comment type="function">
    <text evidence="1">Transaldolase is important for the balance of metabolites in the pentose-phosphate pathway.</text>
</comment>
<comment type="catalytic activity">
    <reaction>
        <text>D-sedoheptulose 7-phosphate + D-glyceraldehyde 3-phosphate = D-erythrose 4-phosphate + beta-D-fructose 6-phosphate</text>
        <dbReference type="Rhea" id="RHEA:17053"/>
        <dbReference type="ChEBI" id="CHEBI:16897"/>
        <dbReference type="ChEBI" id="CHEBI:57483"/>
        <dbReference type="ChEBI" id="CHEBI:57634"/>
        <dbReference type="ChEBI" id="CHEBI:59776"/>
        <dbReference type="EC" id="2.2.1.2"/>
    </reaction>
</comment>
<comment type="pathway">
    <text>Carbohydrate degradation; pentose phosphate pathway; D-glyceraldehyde 3-phosphate and beta-D-fructose 6-phosphate from D-ribose 5-phosphate and D-xylulose 5-phosphate (non-oxidative stage): step 2/3.</text>
</comment>
<comment type="subcellular location">
    <subcellularLocation>
        <location evidence="1">Cytoplasm</location>
    </subcellularLocation>
</comment>
<comment type="similarity">
    <text evidence="2">Belongs to the transaldolase family. Type 3B subfamily.</text>
</comment>
<gene>
    <name type="primary">tal</name>
    <name type="ordered locus">CA_C1347</name>
</gene>
<evidence type="ECO:0000250" key="1"/>
<evidence type="ECO:0000305" key="2"/>
<reference key="1">
    <citation type="journal article" date="2001" name="J. Bacteriol.">
        <title>Genome sequence and comparative analysis of the solvent-producing bacterium Clostridium acetobutylicum.</title>
        <authorList>
            <person name="Noelling J."/>
            <person name="Breton G."/>
            <person name="Omelchenko M.V."/>
            <person name="Makarova K.S."/>
            <person name="Zeng Q."/>
            <person name="Gibson R."/>
            <person name="Lee H.M."/>
            <person name="Dubois J."/>
            <person name="Qiu D."/>
            <person name="Hitti J."/>
            <person name="Wolf Y.I."/>
            <person name="Tatusov R.L."/>
            <person name="Sabathe F."/>
            <person name="Doucette-Stamm L.A."/>
            <person name="Soucaille P."/>
            <person name="Daly M.J."/>
            <person name="Bennett G.N."/>
            <person name="Koonin E.V."/>
            <person name="Smith D.R."/>
        </authorList>
    </citation>
    <scope>NUCLEOTIDE SEQUENCE [LARGE SCALE GENOMIC DNA]</scope>
    <source>
        <strain>ATCC 824 / DSM 792 / JCM 1419 / IAM 19013 / LMG 5710 / NBRC 13948 / NRRL B-527 / VKM B-1787 / 2291 / W</strain>
    </source>
</reference>
<name>TAL_CLOAB</name>
<proteinExistence type="inferred from homology"/>
<sequence>MKLFIDTANVEEIKEVNDMGVICGVTTNPSLVAKEGRDFNEVIREITSIVDGPISGEVIALDAEGMIKEGREIAKIHKNMVVKIPMTEEGLKAVKVLSSEGIKTNVTLIFSAGQALLAARAGATFVSPFLGRLDDIGADSIGLIESIVNIFDIHDIRTEIIAASIRSPKHVIDSAEAGAHIGTVPYKVLKQLIKHPLTDIGIERFMKDWKEAFNK</sequence>
<dbReference type="EC" id="2.2.1.2"/>
<dbReference type="EMBL" id="AE001437">
    <property type="protein sequence ID" value="AAK79315.1"/>
    <property type="molecule type" value="Genomic_DNA"/>
</dbReference>
<dbReference type="PIR" id="H97065">
    <property type="entry name" value="H97065"/>
</dbReference>
<dbReference type="RefSeq" id="NP_347975.1">
    <property type="nucleotide sequence ID" value="NC_003030.1"/>
</dbReference>
<dbReference type="SMR" id="Q97JD9"/>
<dbReference type="STRING" id="272562.CA_C1347"/>
<dbReference type="KEGG" id="cac:CA_C1347"/>
<dbReference type="PATRIC" id="fig|272562.8.peg.1552"/>
<dbReference type="eggNOG" id="COG0176">
    <property type="taxonomic scope" value="Bacteria"/>
</dbReference>
<dbReference type="HOGENOM" id="CLU_079764_0_0_9"/>
<dbReference type="OrthoDB" id="9807051at2"/>
<dbReference type="UniPathway" id="UPA00115">
    <property type="reaction ID" value="UER00414"/>
</dbReference>
<dbReference type="Proteomes" id="UP000000814">
    <property type="component" value="Chromosome"/>
</dbReference>
<dbReference type="GO" id="GO:0005737">
    <property type="term" value="C:cytoplasm"/>
    <property type="evidence" value="ECO:0007669"/>
    <property type="project" value="UniProtKB-SubCell"/>
</dbReference>
<dbReference type="GO" id="GO:0016832">
    <property type="term" value="F:aldehyde-lyase activity"/>
    <property type="evidence" value="ECO:0007669"/>
    <property type="project" value="InterPro"/>
</dbReference>
<dbReference type="GO" id="GO:0004801">
    <property type="term" value="F:transaldolase activity"/>
    <property type="evidence" value="ECO:0007669"/>
    <property type="project" value="UniProtKB-UniRule"/>
</dbReference>
<dbReference type="GO" id="GO:0005975">
    <property type="term" value="P:carbohydrate metabolic process"/>
    <property type="evidence" value="ECO:0007669"/>
    <property type="project" value="InterPro"/>
</dbReference>
<dbReference type="GO" id="GO:0006098">
    <property type="term" value="P:pentose-phosphate shunt"/>
    <property type="evidence" value="ECO:0007669"/>
    <property type="project" value="UniProtKB-UniRule"/>
</dbReference>
<dbReference type="CDD" id="cd00956">
    <property type="entry name" value="Transaldolase_FSA"/>
    <property type="match status" value="1"/>
</dbReference>
<dbReference type="FunFam" id="3.20.20.70:FF:000018">
    <property type="entry name" value="Probable transaldolase"/>
    <property type="match status" value="1"/>
</dbReference>
<dbReference type="Gene3D" id="3.20.20.70">
    <property type="entry name" value="Aldolase class I"/>
    <property type="match status" value="1"/>
</dbReference>
<dbReference type="HAMAP" id="MF_00494">
    <property type="entry name" value="Transaldolase_3b"/>
    <property type="match status" value="1"/>
</dbReference>
<dbReference type="InterPro" id="IPR013785">
    <property type="entry name" value="Aldolase_TIM"/>
</dbReference>
<dbReference type="InterPro" id="IPR001585">
    <property type="entry name" value="TAL/FSA"/>
</dbReference>
<dbReference type="InterPro" id="IPR022999">
    <property type="entry name" value="Transaldolase_3B"/>
</dbReference>
<dbReference type="InterPro" id="IPR004731">
    <property type="entry name" value="Transaldolase_3B/F6P_aldolase"/>
</dbReference>
<dbReference type="InterPro" id="IPR018225">
    <property type="entry name" value="Transaldolase_AS"/>
</dbReference>
<dbReference type="InterPro" id="IPR033919">
    <property type="entry name" value="TSA/FSA_arc/bac"/>
</dbReference>
<dbReference type="NCBIfam" id="TIGR00875">
    <property type="entry name" value="fsa_talC_mipB"/>
    <property type="match status" value="1"/>
</dbReference>
<dbReference type="PANTHER" id="PTHR10683">
    <property type="entry name" value="TRANSALDOLASE"/>
    <property type="match status" value="1"/>
</dbReference>
<dbReference type="PANTHER" id="PTHR10683:SF36">
    <property type="entry name" value="TRANSALDOLASE"/>
    <property type="match status" value="1"/>
</dbReference>
<dbReference type="Pfam" id="PF00923">
    <property type="entry name" value="TAL_FSA"/>
    <property type="match status" value="1"/>
</dbReference>
<dbReference type="SUPFAM" id="SSF51569">
    <property type="entry name" value="Aldolase"/>
    <property type="match status" value="1"/>
</dbReference>
<dbReference type="PROSITE" id="PS01054">
    <property type="entry name" value="TRANSALDOLASE_1"/>
    <property type="match status" value="1"/>
</dbReference>
<dbReference type="PROSITE" id="PS00958">
    <property type="entry name" value="TRANSALDOLASE_2"/>
    <property type="match status" value="1"/>
</dbReference>
<keyword id="KW-0963">Cytoplasm</keyword>
<keyword id="KW-0570">Pentose shunt</keyword>
<keyword id="KW-1185">Reference proteome</keyword>
<keyword id="KW-0704">Schiff base</keyword>
<keyword id="KW-0808">Transferase</keyword>